<feature type="chain" id="PRO_0000057032" description="RNA pyrophosphohydrolase">
    <location>
        <begin position="1"/>
        <end position="172"/>
    </location>
</feature>
<feature type="domain" description="Nudix hydrolase" evidence="1">
    <location>
        <begin position="6"/>
        <end position="149"/>
    </location>
</feature>
<feature type="short sequence motif" description="Nudix box">
    <location>
        <begin position="38"/>
        <end position="59"/>
    </location>
</feature>
<comment type="function">
    <text evidence="1">Accelerates the degradation of transcripts by removing pyrophosphate from the 5'-end of triphosphorylated RNA, leading to a more labile monophosphorylated state that can stimulate subsequent ribonuclease cleavage.</text>
</comment>
<comment type="cofactor">
    <cofactor evidence="1">
        <name>a divalent metal cation</name>
        <dbReference type="ChEBI" id="CHEBI:60240"/>
    </cofactor>
</comment>
<comment type="similarity">
    <text evidence="1">Belongs to the Nudix hydrolase family. RppH subfamily.</text>
</comment>
<proteinExistence type="inferred from homology"/>
<evidence type="ECO:0000255" key="1">
    <source>
        <dbReference type="HAMAP-Rule" id="MF_00298"/>
    </source>
</evidence>
<keyword id="KW-0378">Hydrolase</keyword>
<reference key="1">
    <citation type="submission" date="2002-12" db="EMBL/GenBank/DDBJ databases">
        <title>Complete genome sequence of Vibrio vulnificus CMCP6.</title>
        <authorList>
            <person name="Rhee J.H."/>
            <person name="Kim S.Y."/>
            <person name="Chung S.S."/>
            <person name="Kim J.J."/>
            <person name="Moon Y.H."/>
            <person name="Jeong H."/>
            <person name="Choy H.E."/>
        </authorList>
    </citation>
    <scope>NUCLEOTIDE SEQUENCE [LARGE SCALE GENOMIC DNA]</scope>
    <source>
        <strain>CMCP6</strain>
    </source>
</reference>
<dbReference type="EC" id="3.6.1.-" evidence="1"/>
<dbReference type="EMBL" id="AE016795">
    <property type="protein sequence ID" value="AAO09038.1"/>
    <property type="molecule type" value="Genomic_DNA"/>
</dbReference>
<dbReference type="RefSeq" id="WP_011078608.1">
    <property type="nucleotide sequence ID" value="NC_004459.3"/>
</dbReference>
<dbReference type="SMR" id="Q8DER5"/>
<dbReference type="GeneID" id="93894832"/>
<dbReference type="KEGG" id="vvu:VV1_0520"/>
<dbReference type="HOGENOM" id="CLU_087195_3_2_6"/>
<dbReference type="Proteomes" id="UP000002275">
    <property type="component" value="Chromosome 1"/>
</dbReference>
<dbReference type="GO" id="GO:0005737">
    <property type="term" value="C:cytoplasm"/>
    <property type="evidence" value="ECO:0007669"/>
    <property type="project" value="TreeGrafter"/>
</dbReference>
<dbReference type="GO" id="GO:0034353">
    <property type="term" value="F:mRNA 5'-diphosphatase activity"/>
    <property type="evidence" value="ECO:0007669"/>
    <property type="project" value="TreeGrafter"/>
</dbReference>
<dbReference type="GO" id="GO:0006402">
    <property type="term" value="P:mRNA catabolic process"/>
    <property type="evidence" value="ECO:0007669"/>
    <property type="project" value="TreeGrafter"/>
</dbReference>
<dbReference type="CDD" id="cd03671">
    <property type="entry name" value="NUDIX_Ap4A_hydrolase_plant_like"/>
    <property type="match status" value="1"/>
</dbReference>
<dbReference type="FunFam" id="3.90.79.10:FF:000001">
    <property type="entry name" value="RNA pyrophosphohydrolase"/>
    <property type="match status" value="1"/>
</dbReference>
<dbReference type="Gene3D" id="3.90.79.10">
    <property type="entry name" value="Nucleoside Triphosphate Pyrophosphohydrolase"/>
    <property type="match status" value="1"/>
</dbReference>
<dbReference type="HAMAP" id="MF_00298">
    <property type="entry name" value="Nudix_RppH"/>
    <property type="match status" value="1"/>
</dbReference>
<dbReference type="InterPro" id="IPR020476">
    <property type="entry name" value="Nudix_hydrolase"/>
</dbReference>
<dbReference type="InterPro" id="IPR015797">
    <property type="entry name" value="NUDIX_hydrolase-like_dom_sf"/>
</dbReference>
<dbReference type="InterPro" id="IPR020084">
    <property type="entry name" value="NUDIX_hydrolase_CS"/>
</dbReference>
<dbReference type="InterPro" id="IPR000086">
    <property type="entry name" value="NUDIX_hydrolase_dom"/>
</dbReference>
<dbReference type="InterPro" id="IPR022927">
    <property type="entry name" value="RppH"/>
</dbReference>
<dbReference type="NCBIfam" id="NF001934">
    <property type="entry name" value="PRK00714.1-1"/>
    <property type="match status" value="1"/>
</dbReference>
<dbReference type="NCBIfam" id="NF001936">
    <property type="entry name" value="PRK00714.1-3"/>
    <property type="match status" value="1"/>
</dbReference>
<dbReference type="NCBIfam" id="NF001937">
    <property type="entry name" value="PRK00714.1-4"/>
    <property type="match status" value="1"/>
</dbReference>
<dbReference type="NCBIfam" id="NF001938">
    <property type="entry name" value="PRK00714.1-5"/>
    <property type="match status" value="1"/>
</dbReference>
<dbReference type="PANTHER" id="PTHR23114">
    <property type="entry name" value="M7GPPPN-MRNA HYDROLASE"/>
    <property type="match status" value="1"/>
</dbReference>
<dbReference type="PANTHER" id="PTHR23114:SF17">
    <property type="entry name" value="M7GPPPN-MRNA HYDROLASE"/>
    <property type="match status" value="1"/>
</dbReference>
<dbReference type="Pfam" id="PF00293">
    <property type="entry name" value="NUDIX"/>
    <property type="match status" value="1"/>
</dbReference>
<dbReference type="PRINTS" id="PR00502">
    <property type="entry name" value="NUDIXFAMILY"/>
</dbReference>
<dbReference type="SUPFAM" id="SSF55811">
    <property type="entry name" value="Nudix"/>
    <property type="match status" value="1"/>
</dbReference>
<dbReference type="PROSITE" id="PS51462">
    <property type="entry name" value="NUDIX"/>
    <property type="match status" value="1"/>
</dbReference>
<dbReference type="PROSITE" id="PS00893">
    <property type="entry name" value="NUDIX_BOX"/>
    <property type="match status" value="1"/>
</dbReference>
<protein>
    <recommendedName>
        <fullName evidence="1">RNA pyrophosphohydrolase</fullName>
        <ecNumber evidence="1">3.6.1.-</ecNumber>
    </recommendedName>
    <alternativeName>
        <fullName evidence="1">(Di)nucleoside polyphosphate hydrolase</fullName>
    </alternativeName>
</protein>
<name>RPPH_VIBVU</name>
<gene>
    <name evidence="1" type="primary">rppH</name>
    <name evidence="1" type="synonym">nudH</name>
    <name type="ordered locus">VV1_0520</name>
</gene>
<accession>Q8DER5</accession>
<organism>
    <name type="scientific">Vibrio vulnificus (strain CMCP6)</name>
    <dbReference type="NCBI Taxonomy" id="216895"/>
    <lineage>
        <taxon>Bacteria</taxon>
        <taxon>Pseudomonadati</taxon>
        <taxon>Pseudomonadota</taxon>
        <taxon>Gammaproteobacteria</taxon>
        <taxon>Vibrionales</taxon>
        <taxon>Vibrionaceae</taxon>
        <taxon>Vibrio</taxon>
    </lineage>
</organism>
<sequence>MIDGDGYRLNVGIVICNNHGQVFWAKRYGQHSWQFPQGGIDDGETPEQAMFRELYEEVGLTHKDVKIIASSRHWLRYKLPKRLVRWDSKPVCIGQKQKWFLLRLECDESKINMQKGSSPEFDGWRWVSYWYPVRQVVSFKRDVYRRAMKEFASLAMPFRERKLKGKKVKRRG</sequence>